<evidence type="ECO:0000255" key="1">
    <source>
        <dbReference type="HAMAP-Rule" id="MF_00720"/>
    </source>
</evidence>
<keyword id="KW-0235">DNA replication</keyword>
<keyword id="KW-0238">DNA-binding</keyword>
<keyword id="KW-0639">Primosome</keyword>
<name>PRIB_ACTPJ</name>
<accession>B0BQB2</accession>
<proteinExistence type="inferred from homology"/>
<gene>
    <name evidence="1" type="primary">priB</name>
    <name type="ordered locus">APJL_1191</name>
</gene>
<comment type="function">
    <text evidence="1">Involved in the restart of stalled replication forks, which reloads the replicative helicase on sites other than the origin of replication; the PriA-PriB pathway is the major replication restart pathway. During primosome assembly it facilitates complex formation between PriA and DnaT on DNA; stabilizes PriA on DNA. Stimulates the DNA unwinding activity of PriA helicase.</text>
</comment>
<comment type="subunit">
    <text evidence="1">Homodimer. Interacts with PriA and DnaT. Component of the replication restart primosome. Primosome assembly occurs via a 'hand-off' mechanism. PriA binds to replication forks, subsequently PriB then DnaT bind; DnaT then displaces ssDNA to generate the helicase loading substrate.</text>
</comment>
<comment type="similarity">
    <text evidence="1">Belongs to the PriB family.</text>
</comment>
<dbReference type="EMBL" id="CP000687">
    <property type="protein sequence ID" value="ABY69747.1"/>
    <property type="molecule type" value="Genomic_DNA"/>
</dbReference>
<dbReference type="RefSeq" id="WP_005598106.1">
    <property type="nucleotide sequence ID" value="NC_010278.1"/>
</dbReference>
<dbReference type="SMR" id="B0BQB2"/>
<dbReference type="GeneID" id="48599407"/>
<dbReference type="KEGG" id="apj:APJL_1191"/>
<dbReference type="HOGENOM" id="CLU_166075_0_0_6"/>
<dbReference type="Proteomes" id="UP000008547">
    <property type="component" value="Chromosome"/>
</dbReference>
<dbReference type="GO" id="GO:1990077">
    <property type="term" value="C:primosome complex"/>
    <property type="evidence" value="ECO:0007669"/>
    <property type="project" value="UniProtKB-KW"/>
</dbReference>
<dbReference type="GO" id="GO:0003697">
    <property type="term" value="F:single-stranded DNA binding"/>
    <property type="evidence" value="ECO:0007669"/>
    <property type="project" value="UniProtKB-UniRule"/>
</dbReference>
<dbReference type="GO" id="GO:0006269">
    <property type="term" value="P:DNA replication, synthesis of primer"/>
    <property type="evidence" value="ECO:0007669"/>
    <property type="project" value="UniProtKB-KW"/>
</dbReference>
<dbReference type="Gene3D" id="2.40.50.140">
    <property type="entry name" value="Nucleic acid-binding proteins"/>
    <property type="match status" value="1"/>
</dbReference>
<dbReference type="HAMAP" id="MF_00720">
    <property type="entry name" value="PriB"/>
    <property type="match status" value="1"/>
</dbReference>
<dbReference type="InterPro" id="IPR012340">
    <property type="entry name" value="NA-bd_OB-fold"/>
</dbReference>
<dbReference type="InterPro" id="IPR000424">
    <property type="entry name" value="Primosome_PriB/ssb"/>
</dbReference>
<dbReference type="InterPro" id="IPR023646">
    <property type="entry name" value="Prisomal_replication_PriB"/>
</dbReference>
<dbReference type="NCBIfam" id="TIGR04418">
    <property type="entry name" value="PriB_gamma"/>
    <property type="match status" value="1"/>
</dbReference>
<dbReference type="Pfam" id="PF22657">
    <property type="entry name" value="SSB_1"/>
    <property type="match status" value="1"/>
</dbReference>
<dbReference type="PIRSF" id="PIRSF003135">
    <property type="entry name" value="Primosomal_n"/>
    <property type="match status" value="1"/>
</dbReference>
<dbReference type="SUPFAM" id="SSF50249">
    <property type="entry name" value="Nucleic acid-binding proteins"/>
    <property type="match status" value="1"/>
</dbReference>
<dbReference type="PROSITE" id="PS50935">
    <property type="entry name" value="SSB"/>
    <property type="match status" value="1"/>
</dbReference>
<feature type="chain" id="PRO_1000132617" description="Replication restart protein PriB">
    <location>
        <begin position="1"/>
        <end position="124"/>
    </location>
</feature>
<feature type="domain" description="SSB" evidence="1">
    <location>
        <begin position="12"/>
        <end position="112"/>
    </location>
</feature>
<reference key="1">
    <citation type="journal article" date="2008" name="PLoS ONE">
        <title>Genome biology of Actinobacillus pleuropneumoniae JL03, an isolate of serotype 3 prevalent in China.</title>
        <authorList>
            <person name="Xu Z."/>
            <person name="Zhou Y."/>
            <person name="Li L."/>
            <person name="Zhou R."/>
            <person name="Xiao S."/>
            <person name="Wan Y."/>
            <person name="Zhang S."/>
            <person name="Wang K."/>
            <person name="Li W."/>
            <person name="Li L."/>
            <person name="Jin H."/>
            <person name="Kang M."/>
            <person name="Dalai B."/>
            <person name="Li T."/>
            <person name="Liu L."/>
            <person name="Cheng Y."/>
            <person name="Zhang L."/>
            <person name="Xu T."/>
            <person name="Zheng H."/>
            <person name="Pu S."/>
            <person name="Wang B."/>
            <person name="Gu W."/>
            <person name="Zhang X.L."/>
            <person name="Zhu G.-F."/>
            <person name="Wang S."/>
            <person name="Zhao G.-P."/>
            <person name="Chen H."/>
        </authorList>
    </citation>
    <scope>NUCLEOTIDE SEQUENCE [LARGE SCALE GENOMIC DNA]</scope>
    <source>
        <strain>JL03</strain>
    </source>
</reference>
<organism>
    <name type="scientific">Actinobacillus pleuropneumoniae serotype 3 (strain JL03)</name>
    <dbReference type="NCBI Taxonomy" id="434271"/>
    <lineage>
        <taxon>Bacteria</taxon>
        <taxon>Pseudomonadati</taxon>
        <taxon>Pseudomonadota</taxon>
        <taxon>Gammaproteobacteria</taxon>
        <taxon>Pasteurellales</taxon>
        <taxon>Pasteurellaceae</taxon>
        <taxon>Actinobacillus</taxon>
    </lineage>
</organism>
<protein>
    <recommendedName>
        <fullName evidence="1">Replication restart protein PriB</fullName>
    </recommendedName>
</protein>
<sequence length="124" mass="14131">MNQRKLASNSPIDNCLILSGSVASTVKQSQNPLGVPNYRFWLEHRSIQTEVNLERQAWCKIQVILNGNQFSLITQQIKLGDKIRVYGFIHTHKDYNGLSQLVVHAEHIEFIDQEKPNGTLFPSS</sequence>